<accession>A2SHL0</accession>
<keyword id="KW-1185">Reference proteome</keyword>
<protein>
    <recommendedName>
        <fullName evidence="1">UPF0225 protein Mpe_A2093</fullName>
    </recommendedName>
</protein>
<gene>
    <name type="ordered locus">Mpe_A2093</name>
</gene>
<organism>
    <name type="scientific">Methylibium petroleiphilum (strain ATCC BAA-1232 / LMG 22953 / PM1)</name>
    <dbReference type="NCBI Taxonomy" id="420662"/>
    <lineage>
        <taxon>Bacteria</taxon>
        <taxon>Pseudomonadati</taxon>
        <taxon>Pseudomonadota</taxon>
        <taxon>Betaproteobacteria</taxon>
        <taxon>Burkholderiales</taxon>
        <taxon>Sphaerotilaceae</taxon>
        <taxon>Methylibium</taxon>
    </lineage>
</organism>
<comment type="similarity">
    <text evidence="1">Belongs to the UPF0225 family.</text>
</comment>
<sequence>MVPDAKHAPLPCPCGRPAYDRCCGRHVGTALPAPDAETLMRSRYSAFVLDRREHLLATWHASTRPAAIEPPPPGLRWLGLEVRQHRLTGPDAAEVEFVARSKLAGRAHRLHERSRFVRDQGRWFYLDGEIDPPVAG</sequence>
<proteinExistence type="inferred from homology"/>
<evidence type="ECO:0000255" key="1">
    <source>
        <dbReference type="HAMAP-Rule" id="MF_00612"/>
    </source>
</evidence>
<reference key="1">
    <citation type="journal article" date="2007" name="J. Bacteriol.">
        <title>Whole-genome analysis of the methyl tert-butyl ether-degrading beta-proteobacterium Methylibium petroleiphilum PM1.</title>
        <authorList>
            <person name="Kane S.R."/>
            <person name="Chakicherla A.Y."/>
            <person name="Chain P.S.G."/>
            <person name="Schmidt R."/>
            <person name="Shin M.W."/>
            <person name="Legler T.C."/>
            <person name="Scow K.M."/>
            <person name="Larimer F.W."/>
            <person name="Lucas S.M."/>
            <person name="Richardson P.M."/>
            <person name="Hristova K.R."/>
        </authorList>
    </citation>
    <scope>NUCLEOTIDE SEQUENCE [LARGE SCALE GENOMIC DNA]</scope>
    <source>
        <strain>ATCC BAA-1232 / LMG 22953 / PM1</strain>
    </source>
</reference>
<feature type="chain" id="PRO_1000200400" description="UPF0225 protein Mpe_A2093">
    <location>
        <begin position="1"/>
        <end position="136"/>
    </location>
</feature>
<name>Y2093_METPP</name>
<dbReference type="EMBL" id="CP000555">
    <property type="protein sequence ID" value="ABM95049.1"/>
    <property type="molecule type" value="Genomic_DNA"/>
</dbReference>
<dbReference type="RefSeq" id="WP_011829686.1">
    <property type="nucleotide sequence ID" value="NC_008825.1"/>
</dbReference>
<dbReference type="SMR" id="A2SHL0"/>
<dbReference type="STRING" id="420662.Mpe_A2093"/>
<dbReference type="KEGG" id="mpt:Mpe_A2093"/>
<dbReference type="eggNOG" id="COG3012">
    <property type="taxonomic scope" value="Bacteria"/>
</dbReference>
<dbReference type="HOGENOM" id="CLU_099590_2_0_4"/>
<dbReference type="Proteomes" id="UP000000366">
    <property type="component" value="Chromosome"/>
</dbReference>
<dbReference type="Gene3D" id="3.10.450.50">
    <property type="match status" value="1"/>
</dbReference>
<dbReference type="HAMAP" id="MF_00612">
    <property type="entry name" value="UPF0225"/>
    <property type="match status" value="1"/>
</dbReference>
<dbReference type="InterPro" id="IPR032710">
    <property type="entry name" value="NTF2-like_dom_sf"/>
</dbReference>
<dbReference type="InterPro" id="IPR023006">
    <property type="entry name" value="UPF0225"/>
</dbReference>
<dbReference type="InterPro" id="IPR048469">
    <property type="entry name" value="YchJ-like_M"/>
</dbReference>
<dbReference type="Pfam" id="PF17775">
    <property type="entry name" value="YchJ_M-like"/>
    <property type="match status" value="1"/>
</dbReference>
<dbReference type="SUPFAM" id="SSF54427">
    <property type="entry name" value="NTF2-like"/>
    <property type="match status" value="1"/>
</dbReference>